<accession>Q0AHH6</accession>
<keyword id="KW-0227">DNA damage</keyword>
<keyword id="KW-0234">DNA repair</keyword>
<keyword id="KW-0235">DNA replication</keyword>
<keyword id="KW-0436">Ligase</keyword>
<keyword id="KW-0460">Magnesium</keyword>
<keyword id="KW-0464">Manganese</keyword>
<keyword id="KW-0479">Metal-binding</keyword>
<keyword id="KW-0520">NAD</keyword>
<keyword id="KW-0862">Zinc</keyword>
<comment type="function">
    <text evidence="1">DNA ligase that catalyzes the formation of phosphodiester linkages between 5'-phosphoryl and 3'-hydroxyl groups in double-stranded DNA using NAD as a coenzyme and as the energy source for the reaction. It is essential for DNA replication and repair of damaged DNA.</text>
</comment>
<comment type="catalytic activity">
    <reaction evidence="1">
        <text>NAD(+) + (deoxyribonucleotide)n-3'-hydroxyl + 5'-phospho-(deoxyribonucleotide)m = (deoxyribonucleotide)n+m + AMP + beta-nicotinamide D-nucleotide.</text>
        <dbReference type="EC" id="6.5.1.2"/>
    </reaction>
</comment>
<comment type="cofactor">
    <cofactor evidence="1">
        <name>Mg(2+)</name>
        <dbReference type="ChEBI" id="CHEBI:18420"/>
    </cofactor>
    <cofactor evidence="1">
        <name>Mn(2+)</name>
        <dbReference type="ChEBI" id="CHEBI:29035"/>
    </cofactor>
</comment>
<comment type="similarity">
    <text evidence="1">Belongs to the NAD-dependent DNA ligase family. LigA subfamily.</text>
</comment>
<comment type="sequence caution" evidence="2">
    <conflict type="erroneous initiation">
        <sequence resource="EMBL-CDS" id="ABI59206"/>
    </conflict>
</comment>
<sequence>MESEKIIEERLKALRSTIALHDFHYYVQDAPIIPDADYDKLFRTLQQLEQQYPHLITPDSPTQRVGAPPLKVFARLTHQTPMLSLTNAFTEDEAIAFDKRIREALNVDQVNYAVEPKFDGLAVSLVYTNGILTNGATRGDGYTGEDITLNLRTIPSIPLRLQTATVTDQFEVRGEVVMLKADFEHLNEQQRNKGEKLFANPRNAAAGSLRQLDSNITAARKLTFFAYDAVLSHKDQPFFSKHSEILDYLKSQQFLVAQQNGTTTGVAGLLTYYHEMGALRLSLPYEIDGVVYKVDNLTQQETLGYVSRAPRFAIAHKFPAQEASTELLTIEIQVGRTGALTPVARLAPVFVGGVTVTNATLHNEDEVQRKQIMIGDTVIVRRAGDVIPEVVAVIPEQRPAHAQPFIMPDHCPVCGSKAARLPGEAVTRCTGGLYCPAQRKQAIWHFASRRALDIDGLGEKLIDQLIDRELVHTPADLYKLNIDTLASLERMAEKSARNLVTAIEHSKKTTLPRFIYALGIRHVGEATAKALANQASHLDQLMTLDIEQLQQIPDVGPIVAQSIIDFFSEAHNREVIRQLLDSGLQWEIPNHGVQQSEQTNSAVSGKTFVLTGTLPTMTRDQAKIKIEQQGGKVTGSVSSATSYVVAGSDPGSKYAKAIGLGISVLDEDQLLSLLQNISTGAQQ</sequence>
<evidence type="ECO:0000255" key="1">
    <source>
        <dbReference type="HAMAP-Rule" id="MF_01588"/>
    </source>
</evidence>
<evidence type="ECO:0000305" key="2"/>
<gene>
    <name evidence="1" type="primary">ligA</name>
    <name type="ordered locus">Neut_0946</name>
</gene>
<feature type="chain" id="PRO_0000313340" description="DNA ligase">
    <location>
        <begin position="1"/>
        <end position="683"/>
    </location>
</feature>
<feature type="domain" description="BRCT" evidence="1">
    <location>
        <begin position="598"/>
        <end position="683"/>
    </location>
</feature>
<feature type="active site" description="N6-AMP-lysine intermediate" evidence="1">
    <location>
        <position position="117"/>
    </location>
</feature>
<feature type="binding site" evidence="1">
    <location>
        <begin position="35"/>
        <end position="39"/>
    </location>
    <ligand>
        <name>NAD(+)</name>
        <dbReference type="ChEBI" id="CHEBI:57540"/>
    </ligand>
</feature>
<feature type="binding site" evidence="1">
    <location>
        <begin position="84"/>
        <end position="85"/>
    </location>
    <ligand>
        <name>NAD(+)</name>
        <dbReference type="ChEBI" id="CHEBI:57540"/>
    </ligand>
</feature>
<feature type="binding site" evidence="1">
    <location>
        <position position="115"/>
    </location>
    <ligand>
        <name>NAD(+)</name>
        <dbReference type="ChEBI" id="CHEBI:57540"/>
    </ligand>
</feature>
<feature type="binding site" evidence="1">
    <location>
        <position position="138"/>
    </location>
    <ligand>
        <name>NAD(+)</name>
        <dbReference type="ChEBI" id="CHEBI:57540"/>
    </ligand>
</feature>
<feature type="binding site" evidence="1">
    <location>
        <position position="175"/>
    </location>
    <ligand>
        <name>NAD(+)</name>
        <dbReference type="ChEBI" id="CHEBI:57540"/>
    </ligand>
</feature>
<feature type="binding site" evidence="1">
    <location>
        <position position="293"/>
    </location>
    <ligand>
        <name>NAD(+)</name>
        <dbReference type="ChEBI" id="CHEBI:57540"/>
    </ligand>
</feature>
<feature type="binding site" evidence="1">
    <location>
        <position position="317"/>
    </location>
    <ligand>
        <name>NAD(+)</name>
        <dbReference type="ChEBI" id="CHEBI:57540"/>
    </ligand>
</feature>
<feature type="binding site" evidence="1">
    <location>
        <position position="411"/>
    </location>
    <ligand>
        <name>Zn(2+)</name>
        <dbReference type="ChEBI" id="CHEBI:29105"/>
    </ligand>
</feature>
<feature type="binding site" evidence="1">
    <location>
        <position position="414"/>
    </location>
    <ligand>
        <name>Zn(2+)</name>
        <dbReference type="ChEBI" id="CHEBI:29105"/>
    </ligand>
</feature>
<feature type="binding site" evidence="1">
    <location>
        <position position="429"/>
    </location>
    <ligand>
        <name>Zn(2+)</name>
        <dbReference type="ChEBI" id="CHEBI:29105"/>
    </ligand>
</feature>
<feature type="binding site" evidence="1">
    <location>
        <position position="435"/>
    </location>
    <ligand>
        <name>Zn(2+)</name>
        <dbReference type="ChEBI" id="CHEBI:29105"/>
    </ligand>
</feature>
<proteinExistence type="inferred from homology"/>
<protein>
    <recommendedName>
        <fullName evidence="1">DNA ligase</fullName>
        <ecNumber evidence="1">6.5.1.2</ecNumber>
    </recommendedName>
    <alternativeName>
        <fullName evidence="1">Polydeoxyribonucleotide synthase [NAD(+)]</fullName>
    </alternativeName>
</protein>
<organism>
    <name type="scientific">Nitrosomonas eutropha (strain DSM 101675 / C91 / Nm57)</name>
    <dbReference type="NCBI Taxonomy" id="335283"/>
    <lineage>
        <taxon>Bacteria</taxon>
        <taxon>Pseudomonadati</taxon>
        <taxon>Pseudomonadota</taxon>
        <taxon>Betaproteobacteria</taxon>
        <taxon>Nitrosomonadales</taxon>
        <taxon>Nitrosomonadaceae</taxon>
        <taxon>Nitrosomonas</taxon>
    </lineage>
</organism>
<name>DNLJ_NITEC</name>
<reference key="1">
    <citation type="journal article" date="2007" name="Environ. Microbiol.">
        <title>Whole-genome analysis of the ammonia-oxidizing bacterium, Nitrosomonas eutropha C91: implications for niche adaptation.</title>
        <authorList>
            <person name="Stein L.Y."/>
            <person name="Arp D.J."/>
            <person name="Berube P.M."/>
            <person name="Chain P.S."/>
            <person name="Hauser L."/>
            <person name="Jetten M.S."/>
            <person name="Klotz M.G."/>
            <person name="Larimer F.W."/>
            <person name="Norton J.M."/>
            <person name="Op den Camp H.J.M."/>
            <person name="Shin M."/>
            <person name="Wei X."/>
        </authorList>
    </citation>
    <scope>NUCLEOTIDE SEQUENCE [LARGE SCALE GENOMIC DNA]</scope>
    <source>
        <strain>DSM 101675 / C91 / Nm57</strain>
    </source>
</reference>
<dbReference type="EC" id="6.5.1.2" evidence="1"/>
<dbReference type="EMBL" id="CP000450">
    <property type="protein sequence ID" value="ABI59206.1"/>
    <property type="status" value="ALT_INIT"/>
    <property type="molecule type" value="Genomic_DNA"/>
</dbReference>
<dbReference type="RefSeq" id="WP_041353458.1">
    <property type="nucleotide sequence ID" value="NC_008344.1"/>
</dbReference>
<dbReference type="SMR" id="Q0AHH6"/>
<dbReference type="STRING" id="335283.Neut_0946"/>
<dbReference type="KEGG" id="net:Neut_0946"/>
<dbReference type="eggNOG" id="COG0272">
    <property type="taxonomic scope" value="Bacteria"/>
</dbReference>
<dbReference type="HOGENOM" id="CLU_007764_2_1_4"/>
<dbReference type="OrthoDB" id="9759736at2"/>
<dbReference type="Proteomes" id="UP000001966">
    <property type="component" value="Chromosome"/>
</dbReference>
<dbReference type="GO" id="GO:0005829">
    <property type="term" value="C:cytosol"/>
    <property type="evidence" value="ECO:0007669"/>
    <property type="project" value="TreeGrafter"/>
</dbReference>
<dbReference type="GO" id="GO:0003677">
    <property type="term" value="F:DNA binding"/>
    <property type="evidence" value="ECO:0007669"/>
    <property type="project" value="InterPro"/>
</dbReference>
<dbReference type="GO" id="GO:0003911">
    <property type="term" value="F:DNA ligase (NAD+) activity"/>
    <property type="evidence" value="ECO:0007669"/>
    <property type="project" value="UniProtKB-UniRule"/>
</dbReference>
<dbReference type="GO" id="GO:0046872">
    <property type="term" value="F:metal ion binding"/>
    <property type="evidence" value="ECO:0007669"/>
    <property type="project" value="UniProtKB-KW"/>
</dbReference>
<dbReference type="GO" id="GO:0006281">
    <property type="term" value="P:DNA repair"/>
    <property type="evidence" value="ECO:0007669"/>
    <property type="project" value="UniProtKB-KW"/>
</dbReference>
<dbReference type="GO" id="GO:0006260">
    <property type="term" value="P:DNA replication"/>
    <property type="evidence" value="ECO:0007669"/>
    <property type="project" value="UniProtKB-KW"/>
</dbReference>
<dbReference type="CDD" id="cd17748">
    <property type="entry name" value="BRCT_DNA_ligase_like"/>
    <property type="match status" value="1"/>
</dbReference>
<dbReference type="CDD" id="cd00114">
    <property type="entry name" value="LIGANc"/>
    <property type="match status" value="1"/>
</dbReference>
<dbReference type="FunFam" id="1.10.150.20:FF:000006">
    <property type="entry name" value="DNA ligase"/>
    <property type="match status" value="1"/>
</dbReference>
<dbReference type="FunFam" id="1.10.150.20:FF:000007">
    <property type="entry name" value="DNA ligase"/>
    <property type="match status" value="1"/>
</dbReference>
<dbReference type="FunFam" id="1.10.287.610:FF:000002">
    <property type="entry name" value="DNA ligase"/>
    <property type="match status" value="1"/>
</dbReference>
<dbReference type="FunFam" id="2.40.50.140:FF:000012">
    <property type="entry name" value="DNA ligase"/>
    <property type="match status" value="1"/>
</dbReference>
<dbReference type="FunFam" id="3.30.470.30:FF:000001">
    <property type="entry name" value="DNA ligase"/>
    <property type="match status" value="1"/>
</dbReference>
<dbReference type="Gene3D" id="6.20.10.30">
    <property type="match status" value="1"/>
</dbReference>
<dbReference type="Gene3D" id="1.10.150.20">
    <property type="entry name" value="5' to 3' exonuclease, C-terminal subdomain"/>
    <property type="match status" value="2"/>
</dbReference>
<dbReference type="Gene3D" id="3.40.50.10190">
    <property type="entry name" value="BRCT domain"/>
    <property type="match status" value="1"/>
</dbReference>
<dbReference type="Gene3D" id="3.30.470.30">
    <property type="entry name" value="DNA ligase/mRNA capping enzyme"/>
    <property type="match status" value="1"/>
</dbReference>
<dbReference type="Gene3D" id="1.10.287.610">
    <property type="entry name" value="Helix hairpin bin"/>
    <property type="match status" value="1"/>
</dbReference>
<dbReference type="Gene3D" id="2.40.50.140">
    <property type="entry name" value="Nucleic acid-binding proteins"/>
    <property type="match status" value="1"/>
</dbReference>
<dbReference type="HAMAP" id="MF_01588">
    <property type="entry name" value="DNA_ligase_A"/>
    <property type="match status" value="1"/>
</dbReference>
<dbReference type="InterPro" id="IPR001357">
    <property type="entry name" value="BRCT_dom"/>
</dbReference>
<dbReference type="InterPro" id="IPR036420">
    <property type="entry name" value="BRCT_dom_sf"/>
</dbReference>
<dbReference type="InterPro" id="IPR041663">
    <property type="entry name" value="DisA/LigA_HHH"/>
</dbReference>
<dbReference type="InterPro" id="IPR001679">
    <property type="entry name" value="DNA_ligase"/>
</dbReference>
<dbReference type="InterPro" id="IPR018239">
    <property type="entry name" value="DNA_ligase_AS"/>
</dbReference>
<dbReference type="InterPro" id="IPR033136">
    <property type="entry name" value="DNA_ligase_CS"/>
</dbReference>
<dbReference type="InterPro" id="IPR013839">
    <property type="entry name" value="DNAligase_adenylation"/>
</dbReference>
<dbReference type="InterPro" id="IPR013840">
    <property type="entry name" value="DNAligase_N"/>
</dbReference>
<dbReference type="InterPro" id="IPR003583">
    <property type="entry name" value="Hlx-hairpin-Hlx_DNA-bd_motif"/>
</dbReference>
<dbReference type="InterPro" id="IPR012340">
    <property type="entry name" value="NA-bd_OB-fold"/>
</dbReference>
<dbReference type="InterPro" id="IPR004150">
    <property type="entry name" value="NAD_DNA_ligase_OB"/>
</dbReference>
<dbReference type="InterPro" id="IPR010994">
    <property type="entry name" value="RuvA_2-like"/>
</dbReference>
<dbReference type="InterPro" id="IPR004149">
    <property type="entry name" value="Znf_DNAligase_C4"/>
</dbReference>
<dbReference type="NCBIfam" id="TIGR00575">
    <property type="entry name" value="dnlj"/>
    <property type="match status" value="1"/>
</dbReference>
<dbReference type="NCBIfam" id="NF005932">
    <property type="entry name" value="PRK07956.1"/>
    <property type="match status" value="1"/>
</dbReference>
<dbReference type="PANTHER" id="PTHR23389">
    <property type="entry name" value="CHROMOSOME TRANSMISSION FIDELITY FACTOR 18"/>
    <property type="match status" value="1"/>
</dbReference>
<dbReference type="PANTHER" id="PTHR23389:SF9">
    <property type="entry name" value="DNA LIGASE"/>
    <property type="match status" value="1"/>
</dbReference>
<dbReference type="Pfam" id="PF00533">
    <property type="entry name" value="BRCT"/>
    <property type="match status" value="1"/>
</dbReference>
<dbReference type="Pfam" id="PF01653">
    <property type="entry name" value="DNA_ligase_aden"/>
    <property type="match status" value="1"/>
</dbReference>
<dbReference type="Pfam" id="PF03120">
    <property type="entry name" value="DNA_ligase_OB"/>
    <property type="match status" value="1"/>
</dbReference>
<dbReference type="Pfam" id="PF03119">
    <property type="entry name" value="DNA_ligase_ZBD"/>
    <property type="match status" value="1"/>
</dbReference>
<dbReference type="Pfam" id="PF12826">
    <property type="entry name" value="HHH_2"/>
    <property type="match status" value="1"/>
</dbReference>
<dbReference type="Pfam" id="PF14520">
    <property type="entry name" value="HHH_5"/>
    <property type="match status" value="1"/>
</dbReference>
<dbReference type="Pfam" id="PF22745">
    <property type="entry name" value="Nlig-Ia"/>
    <property type="match status" value="1"/>
</dbReference>
<dbReference type="PIRSF" id="PIRSF001604">
    <property type="entry name" value="LigA"/>
    <property type="match status" value="1"/>
</dbReference>
<dbReference type="SMART" id="SM00292">
    <property type="entry name" value="BRCT"/>
    <property type="match status" value="1"/>
</dbReference>
<dbReference type="SMART" id="SM00278">
    <property type="entry name" value="HhH1"/>
    <property type="match status" value="4"/>
</dbReference>
<dbReference type="SMART" id="SM00532">
    <property type="entry name" value="LIGANc"/>
    <property type="match status" value="1"/>
</dbReference>
<dbReference type="SUPFAM" id="SSF52113">
    <property type="entry name" value="BRCT domain"/>
    <property type="match status" value="1"/>
</dbReference>
<dbReference type="SUPFAM" id="SSF56091">
    <property type="entry name" value="DNA ligase/mRNA capping enzyme, catalytic domain"/>
    <property type="match status" value="1"/>
</dbReference>
<dbReference type="SUPFAM" id="SSF50249">
    <property type="entry name" value="Nucleic acid-binding proteins"/>
    <property type="match status" value="1"/>
</dbReference>
<dbReference type="SUPFAM" id="SSF47781">
    <property type="entry name" value="RuvA domain 2-like"/>
    <property type="match status" value="1"/>
</dbReference>
<dbReference type="PROSITE" id="PS50172">
    <property type="entry name" value="BRCT"/>
    <property type="match status" value="1"/>
</dbReference>
<dbReference type="PROSITE" id="PS01055">
    <property type="entry name" value="DNA_LIGASE_N1"/>
    <property type="match status" value="1"/>
</dbReference>
<dbReference type="PROSITE" id="PS01056">
    <property type="entry name" value="DNA_LIGASE_N2"/>
    <property type="match status" value="1"/>
</dbReference>